<sequence>MMGKEEEIARIARRLDKMVTKKSAEGAMDLLRELKAMPITLHLLQSTRVGMSVNALRKQSSDEEVIALAKSLIKSWKKLLDASDAKARERGRGMPLPTSSRDASEAPDPSRKRPELPRAPSTPRITTFPPVPVTCDAVRNKCREMLTAALQTDHDHVAIGADCERLSAQIEECIFRDVGNTDMKYKNRVRSRISNLKDAKNPDLRRNVLCGAITPQQIAVMTSEEMASDELKEIRKAMTKEAIREHQMARTGGTQTDLFTCGKCRKKNCTYTQVQTRSSDEPMTTFVVCNECGNRWKFC</sequence>
<protein>
    <recommendedName>
        <fullName>Transcription elongation factor A protein 2</fullName>
    </recommendedName>
    <alternativeName>
        <fullName>Testis-specific S-II</fullName>
    </alternativeName>
    <alternativeName>
        <fullName>Transcription elongation factor S-II protein 2</fullName>
    </alternativeName>
    <alternativeName>
        <fullName>Transcription elongation factor TFIIS.l</fullName>
    </alternativeName>
</protein>
<feature type="chain" id="PRO_0000121449" description="Transcription elongation factor A protein 2">
    <location>
        <begin position="1"/>
        <end position="299"/>
    </location>
</feature>
<feature type="domain" description="TFIIS N-terminal" evidence="3">
    <location>
        <begin position="6"/>
        <end position="83"/>
    </location>
</feature>
<feature type="domain" description="TFIIS central" evidence="4">
    <location>
        <begin position="138"/>
        <end position="254"/>
    </location>
</feature>
<feature type="zinc finger region" description="TFIIS-type" evidence="2">
    <location>
        <begin position="257"/>
        <end position="297"/>
    </location>
</feature>
<feature type="region of interest" description="Disordered" evidence="5">
    <location>
        <begin position="86"/>
        <end position="128"/>
    </location>
</feature>
<feature type="compositionally biased region" description="Basic and acidic residues" evidence="5">
    <location>
        <begin position="102"/>
        <end position="116"/>
    </location>
</feature>
<feature type="binding site" evidence="2">
    <location>
        <position position="261"/>
    </location>
    <ligand>
        <name>Zn(2+)</name>
        <dbReference type="ChEBI" id="CHEBI:29105"/>
    </ligand>
</feature>
<feature type="binding site" evidence="2">
    <location>
        <position position="264"/>
    </location>
    <ligand>
        <name>Zn(2+)</name>
        <dbReference type="ChEBI" id="CHEBI:29105"/>
    </ligand>
</feature>
<feature type="binding site" evidence="2">
    <location>
        <position position="289"/>
    </location>
    <ligand>
        <name>Zn(2+)</name>
        <dbReference type="ChEBI" id="CHEBI:29105"/>
    </ligand>
</feature>
<feature type="binding site" evidence="2">
    <location>
        <position position="292"/>
    </location>
    <ligand>
        <name>Zn(2+)</name>
        <dbReference type="ChEBI" id="CHEBI:29105"/>
    </ligand>
</feature>
<feature type="modified residue" description="Phosphoserine" evidence="1">
    <location>
        <position position="60"/>
    </location>
</feature>
<feature type="modified residue" description="Phosphoserine" evidence="1">
    <location>
        <position position="100"/>
    </location>
</feature>
<feature type="cross-link" description="Glycyl lysine isopeptide (Lys-Gly) (interchain with G-Cter in ubiquitin)" evidence="8">
    <location>
        <position position="58"/>
    </location>
</feature>
<feature type="splice variant" id="VSP_047345" description="In isoform 2." evidence="10">
    <location>
        <begin position="1"/>
        <end position="27"/>
    </location>
</feature>
<feature type="sequence conflict" description="In Ref. 2; BAG51383." evidence="11" ref="2">
    <original>A</original>
    <variation>T</variation>
    <location>
        <position position="55"/>
    </location>
</feature>
<feature type="sequence conflict" description="In Ref. 2; BAG51383." evidence="11" ref="2">
    <original>E</original>
    <variation>V</variation>
    <location>
        <position position="164"/>
    </location>
</feature>
<feature type="helix" evidence="12">
    <location>
        <begin position="139"/>
        <end position="151"/>
    </location>
</feature>
<feature type="helix" evidence="12">
    <location>
        <begin position="155"/>
        <end position="159"/>
    </location>
</feature>
<feature type="helix" evidence="12">
    <location>
        <begin position="163"/>
        <end position="178"/>
    </location>
</feature>
<feature type="turn" evidence="12">
    <location>
        <begin position="181"/>
        <end position="183"/>
    </location>
</feature>
<feature type="helix" evidence="12">
    <location>
        <begin position="184"/>
        <end position="197"/>
    </location>
</feature>
<feature type="strand" evidence="12">
    <location>
        <begin position="199"/>
        <end position="202"/>
    </location>
</feature>
<feature type="helix" evidence="12">
    <location>
        <begin position="203"/>
        <end position="209"/>
    </location>
</feature>
<feature type="helix" evidence="12">
    <location>
        <begin position="215"/>
        <end position="220"/>
    </location>
</feature>
<feature type="helix" evidence="12">
    <location>
        <begin position="223"/>
        <end position="227"/>
    </location>
</feature>
<feature type="turn" evidence="12">
    <location>
        <begin position="229"/>
        <end position="233"/>
    </location>
</feature>
<feature type="strand" evidence="12">
    <location>
        <begin position="235"/>
        <end position="237"/>
    </location>
</feature>
<name>TCEA2_HUMAN</name>
<organism>
    <name type="scientific">Homo sapiens</name>
    <name type="common">Human</name>
    <dbReference type="NCBI Taxonomy" id="9606"/>
    <lineage>
        <taxon>Eukaryota</taxon>
        <taxon>Metazoa</taxon>
        <taxon>Chordata</taxon>
        <taxon>Craniata</taxon>
        <taxon>Vertebrata</taxon>
        <taxon>Euteleostomi</taxon>
        <taxon>Mammalia</taxon>
        <taxon>Eutheria</taxon>
        <taxon>Euarchontoglires</taxon>
        <taxon>Primates</taxon>
        <taxon>Haplorrhini</taxon>
        <taxon>Catarrhini</taxon>
        <taxon>Hominidae</taxon>
        <taxon>Homo</taxon>
    </lineage>
</organism>
<reference key="1">
    <citation type="journal article" date="1995" name="Gene">
        <title>Isolation and characterization of a cDNA encoding a new type of human transcription elongation factor S-II.</title>
        <authorList>
            <person name="Umehara T."/>
            <person name="Kida S."/>
            <person name="Yamamoto T."/>
            <person name="Horikoshi M."/>
        </authorList>
    </citation>
    <scope>NUCLEOTIDE SEQUENCE [MRNA] (ISOFORM 1)</scope>
    <scope>TISSUE SPECIFICITY</scope>
    <scope>INTERACTION WITH GTF2B</scope>
</reference>
<reference key="2">
    <citation type="journal article" date="2004" name="Nat. Genet.">
        <title>Complete sequencing and characterization of 21,243 full-length human cDNAs.</title>
        <authorList>
            <person name="Ota T."/>
            <person name="Suzuki Y."/>
            <person name="Nishikawa T."/>
            <person name="Otsuki T."/>
            <person name="Sugiyama T."/>
            <person name="Irie R."/>
            <person name="Wakamatsu A."/>
            <person name="Hayashi K."/>
            <person name="Sato H."/>
            <person name="Nagai K."/>
            <person name="Kimura K."/>
            <person name="Makita H."/>
            <person name="Sekine M."/>
            <person name="Obayashi M."/>
            <person name="Nishi T."/>
            <person name="Shibahara T."/>
            <person name="Tanaka T."/>
            <person name="Ishii S."/>
            <person name="Yamamoto J."/>
            <person name="Saito K."/>
            <person name="Kawai Y."/>
            <person name="Isono Y."/>
            <person name="Nakamura Y."/>
            <person name="Nagahari K."/>
            <person name="Murakami K."/>
            <person name="Yasuda T."/>
            <person name="Iwayanagi T."/>
            <person name="Wagatsuma M."/>
            <person name="Shiratori A."/>
            <person name="Sudo H."/>
            <person name="Hosoiri T."/>
            <person name="Kaku Y."/>
            <person name="Kodaira H."/>
            <person name="Kondo H."/>
            <person name="Sugawara M."/>
            <person name="Takahashi M."/>
            <person name="Kanda K."/>
            <person name="Yokoi T."/>
            <person name="Furuya T."/>
            <person name="Kikkawa E."/>
            <person name="Omura Y."/>
            <person name="Abe K."/>
            <person name="Kamihara K."/>
            <person name="Katsuta N."/>
            <person name="Sato K."/>
            <person name="Tanikawa M."/>
            <person name="Yamazaki M."/>
            <person name="Ninomiya K."/>
            <person name="Ishibashi T."/>
            <person name="Yamashita H."/>
            <person name="Murakawa K."/>
            <person name="Fujimori K."/>
            <person name="Tanai H."/>
            <person name="Kimata M."/>
            <person name="Watanabe M."/>
            <person name="Hiraoka S."/>
            <person name="Chiba Y."/>
            <person name="Ishida S."/>
            <person name="Ono Y."/>
            <person name="Takiguchi S."/>
            <person name="Watanabe S."/>
            <person name="Yosida M."/>
            <person name="Hotuta T."/>
            <person name="Kusano J."/>
            <person name="Kanehori K."/>
            <person name="Takahashi-Fujii A."/>
            <person name="Hara H."/>
            <person name="Tanase T.-O."/>
            <person name="Nomura Y."/>
            <person name="Togiya S."/>
            <person name="Komai F."/>
            <person name="Hara R."/>
            <person name="Takeuchi K."/>
            <person name="Arita M."/>
            <person name="Imose N."/>
            <person name="Musashino K."/>
            <person name="Yuuki H."/>
            <person name="Oshima A."/>
            <person name="Sasaki N."/>
            <person name="Aotsuka S."/>
            <person name="Yoshikawa Y."/>
            <person name="Matsunawa H."/>
            <person name="Ichihara T."/>
            <person name="Shiohata N."/>
            <person name="Sano S."/>
            <person name="Moriya S."/>
            <person name="Momiyama H."/>
            <person name="Satoh N."/>
            <person name="Takami S."/>
            <person name="Terashima Y."/>
            <person name="Suzuki O."/>
            <person name="Nakagawa S."/>
            <person name="Senoh A."/>
            <person name="Mizoguchi H."/>
            <person name="Goto Y."/>
            <person name="Shimizu F."/>
            <person name="Wakebe H."/>
            <person name="Hishigaki H."/>
            <person name="Watanabe T."/>
            <person name="Sugiyama A."/>
            <person name="Takemoto M."/>
            <person name="Kawakami B."/>
            <person name="Yamazaki M."/>
            <person name="Watanabe K."/>
            <person name="Kumagai A."/>
            <person name="Itakura S."/>
            <person name="Fukuzumi Y."/>
            <person name="Fujimori Y."/>
            <person name="Komiyama M."/>
            <person name="Tashiro H."/>
            <person name="Tanigami A."/>
            <person name="Fujiwara T."/>
            <person name="Ono T."/>
            <person name="Yamada K."/>
            <person name="Fujii Y."/>
            <person name="Ozaki K."/>
            <person name="Hirao M."/>
            <person name="Ohmori Y."/>
            <person name="Kawabata A."/>
            <person name="Hikiji T."/>
            <person name="Kobatake N."/>
            <person name="Inagaki H."/>
            <person name="Ikema Y."/>
            <person name="Okamoto S."/>
            <person name="Okitani R."/>
            <person name="Kawakami T."/>
            <person name="Noguchi S."/>
            <person name="Itoh T."/>
            <person name="Shigeta K."/>
            <person name="Senba T."/>
            <person name="Matsumura K."/>
            <person name="Nakajima Y."/>
            <person name="Mizuno T."/>
            <person name="Morinaga M."/>
            <person name="Sasaki M."/>
            <person name="Togashi T."/>
            <person name="Oyama M."/>
            <person name="Hata H."/>
            <person name="Watanabe M."/>
            <person name="Komatsu T."/>
            <person name="Mizushima-Sugano J."/>
            <person name="Satoh T."/>
            <person name="Shirai Y."/>
            <person name="Takahashi Y."/>
            <person name="Nakagawa K."/>
            <person name="Okumura K."/>
            <person name="Nagase T."/>
            <person name="Nomura N."/>
            <person name="Kikuchi H."/>
            <person name="Masuho Y."/>
            <person name="Yamashita R."/>
            <person name="Nakai K."/>
            <person name="Yada T."/>
            <person name="Nakamura Y."/>
            <person name="Ohara O."/>
            <person name="Isogai T."/>
            <person name="Sugano S."/>
        </authorList>
    </citation>
    <scope>NUCLEOTIDE SEQUENCE [LARGE SCALE MRNA] (ISOFORM 2)</scope>
    <source>
        <tissue>Placenta</tissue>
    </source>
</reference>
<reference key="3">
    <citation type="journal article" date="2001" name="Nature">
        <title>The DNA sequence and comparative analysis of human chromosome 20.</title>
        <authorList>
            <person name="Deloukas P."/>
            <person name="Matthews L.H."/>
            <person name="Ashurst J.L."/>
            <person name="Burton J."/>
            <person name="Gilbert J.G.R."/>
            <person name="Jones M."/>
            <person name="Stavrides G."/>
            <person name="Almeida J.P."/>
            <person name="Babbage A.K."/>
            <person name="Bagguley C.L."/>
            <person name="Bailey J."/>
            <person name="Barlow K.F."/>
            <person name="Bates K.N."/>
            <person name="Beard L.M."/>
            <person name="Beare D.M."/>
            <person name="Beasley O.P."/>
            <person name="Bird C.P."/>
            <person name="Blakey S.E."/>
            <person name="Bridgeman A.M."/>
            <person name="Brown A.J."/>
            <person name="Buck D."/>
            <person name="Burrill W.D."/>
            <person name="Butler A.P."/>
            <person name="Carder C."/>
            <person name="Carter N.P."/>
            <person name="Chapman J.C."/>
            <person name="Clamp M."/>
            <person name="Clark G."/>
            <person name="Clark L.N."/>
            <person name="Clark S.Y."/>
            <person name="Clee C.M."/>
            <person name="Clegg S."/>
            <person name="Cobley V.E."/>
            <person name="Collier R.E."/>
            <person name="Connor R.E."/>
            <person name="Corby N.R."/>
            <person name="Coulson A."/>
            <person name="Coville G.J."/>
            <person name="Deadman R."/>
            <person name="Dhami P.D."/>
            <person name="Dunn M."/>
            <person name="Ellington A.G."/>
            <person name="Frankland J.A."/>
            <person name="Fraser A."/>
            <person name="French L."/>
            <person name="Garner P."/>
            <person name="Grafham D.V."/>
            <person name="Griffiths C."/>
            <person name="Griffiths M.N.D."/>
            <person name="Gwilliam R."/>
            <person name="Hall R.E."/>
            <person name="Hammond S."/>
            <person name="Harley J.L."/>
            <person name="Heath P.D."/>
            <person name="Ho S."/>
            <person name="Holden J.L."/>
            <person name="Howden P.J."/>
            <person name="Huckle E."/>
            <person name="Hunt A.R."/>
            <person name="Hunt S.E."/>
            <person name="Jekosch K."/>
            <person name="Johnson C.M."/>
            <person name="Johnson D."/>
            <person name="Kay M.P."/>
            <person name="Kimberley A.M."/>
            <person name="King A."/>
            <person name="Knights A."/>
            <person name="Laird G.K."/>
            <person name="Lawlor S."/>
            <person name="Lehvaeslaiho M.H."/>
            <person name="Leversha M.A."/>
            <person name="Lloyd C."/>
            <person name="Lloyd D.M."/>
            <person name="Lovell J.D."/>
            <person name="Marsh V.L."/>
            <person name="Martin S.L."/>
            <person name="McConnachie L.J."/>
            <person name="McLay K."/>
            <person name="McMurray A.A."/>
            <person name="Milne S.A."/>
            <person name="Mistry D."/>
            <person name="Moore M.J.F."/>
            <person name="Mullikin J.C."/>
            <person name="Nickerson T."/>
            <person name="Oliver K."/>
            <person name="Parker A."/>
            <person name="Patel R."/>
            <person name="Pearce T.A.V."/>
            <person name="Peck A.I."/>
            <person name="Phillimore B.J.C.T."/>
            <person name="Prathalingam S.R."/>
            <person name="Plumb R.W."/>
            <person name="Ramsay H."/>
            <person name="Rice C.M."/>
            <person name="Ross M.T."/>
            <person name="Scott C.E."/>
            <person name="Sehra H.K."/>
            <person name="Shownkeen R."/>
            <person name="Sims S."/>
            <person name="Skuce C.D."/>
            <person name="Smith M.L."/>
            <person name="Soderlund C."/>
            <person name="Steward C.A."/>
            <person name="Sulston J.E."/>
            <person name="Swann R.M."/>
            <person name="Sycamore N."/>
            <person name="Taylor R."/>
            <person name="Tee L."/>
            <person name="Thomas D.W."/>
            <person name="Thorpe A."/>
            <person name="Tracey A."/>
            <person name="Tromans A.C."/>
            <person name="Vaudin M."/>
            <person name="Wall M."/>
            <person name="Wallis J.M."/>
            <person name="Whitehead S.L."/>
            <person name="Whittaker P."/>
            <person name="Willey D.L."/>
            <person name="Williams L."/>
            <person name="Williams S.A."/>
            <person name="Wilming L."/>
            <person name="Wray P.W."/>
            <person name="Hubbard T."/>
            <person name="Durbin R.M."/>
            <person name="Bentley D.R."/>
            <person name="Beck S."/>
            <person name="Rogers J."/>
        </authorList>
    </citation>
    <scope>NUCLEOTIDE SEQUENCE [LARGE SCALE GENOMIC DNA]</scope>
</reference>
<reference key="4">
    <citation type="journal article" date="2004" name="Genome Res.">
        <title>The status, quality, and expansion of the NIH full-length cDNA project: the Mammalian Gene Collection (MGC).</title>
        <authorList>
            <consortium name="The MGC Project Team"/>
        </authorList>
    </citation>
    <scope>NUCLEOTIDE SEQUENCE [LARGE SCALE MRNA] (ISOFORM 1)</scope>
    <source>
        <tissue>Skin</tissue>
    </source>
</reference>
<reference key="5">
    <citation type="journal article" date="1997" name="Genomics">
        <title>Genomic characterization of a testis-specific TFIIS (TCEA2) gene.</title>
        <authorList>
            <person name="Weaver Z.A."/>
            <person name="Kane C.M."/>
        </authorList>
    </citation>
    <scope>NUCLEOTIDE SEQUENCE [GENOMIC DNA] OF 1-24</scope>
    <source>
        <tissue>Brain</tissue>
    </source>
</reference>
<reference key="6">
    <citation type="journal article" date="2002" name="Nucleic Acids Res.">
        <title>RNA polymerase II complexes in the very early phase of transcription are not susceptible to TFIIS-induced exonucleolytic cleavage.</title>
        <authorList>
            <person name="Sijbrandi R."/>
            <person name="Fiedler U."/>
            <person name="Timmers H.T.M."/>
        </authorList>
    </citation>
    <scope>FUNCTION</scope>
</reference>
<reference key="7">
    <citation type="journal article" date="2003" name="Biochem. Biophys. Res. Commun.">
        <title>Identification of EloA-BP1, a novel Elongin A binding protein with an exonuclease homology domain.</title>
        <authorList>
            <person name="Tamura K."/>
            <person name="Miyata K."/>
            <person name="Sugahara K."/>
            <person name="Onishi S."/>
            <person name="Shuin T."/>
            <person name="Aso T."/>
        </authorList>
    </citation>
    <scope>INTERACTION WITH REXO1</scope>
</reference>
<reference key="8">
    <citation type="journal article" date="2008" name="Proteomics">
        <title>Proteomic analysis of ubiquitinated proteins in normal hepatocyte cell line Chang liver cells.</title>
        <authorList>
            <person name="Tan F."/>
            <person name="Lu L."/>
            <person name="Cai Y."/>
            <person name="Wang J."/>
            <person name="Xie Y."/>
            <person name="Wang L."/>
            <person name="Gong Y."/>
            <person name="Xu B.-E."/>
            <person name="Wu J."/>
            <person name="Luo Y."/>
            <person name="Qiang B."/>
            <person name="Yuan J."/>
            <person name="Sun X."/>
            <person name="Peng X."/>
        </authorList>
    </citation>
    <scope>UBIQUITINATION [LARGE SCALE ANALYSIS] AT LYS-58</scope>
    <scope>IDENTIFICATION BY MASS SPECTROMETRY</scope>
    <source>
        <tissue>Liver</tissue>
    </source>
</reference>
<reference key="9">
    <citation type="journal article" date="2012" name="Proc. Natl. Acad. Sci. U.S.A.">
        <title>N-terminal acetylome analyses and functional insights of the N-terminal acetyltransferase NatB.</title>
        <authorList>
            <person name="Van Damme P."/>
            <person name="Lasa M."/>
            <person name="Polevoda B."/>
            <person name="Gazquez C."/>
            <person name="Elosegui-Artola A."/>
            <person name="Kim D.S."/>
            <person name="De Juan-Pardo E."/>
            <person name="Demeyer K."/>
            <person name="Hole K."/>
            <person name="Larrea E."/>
            <person name="Timmerman E."/>
            <person name="Prieto J."/>
            <person name="Arnesen T."/>
            <person name="Sherman F."/>
            <person name="Gevaert K."/>
            <person name="Aldabe R."/>
        </authorList>
    </citation>
    <scope>IDENTIFICATION BY MASS SPECTROMETRY [LARGE SCALE ANALYSIS]</scope>
</reference>
<gene>
    <name type="primary">TCEA2</name>
</gene>
<keyword id="KW-0002">3D-structure</keyword>
<keyword id="KW-0025">Alternative splicing</keyword>
<keyword id="KW-0238">DNA-binding</keyword>
<keyword id="KW-1017">Isopeptide bond</keyword>
<keyword id="KW-0479">Metal-binding</keyword>
<keyword id="KW-0539">Nucleus</keyword>
<keyword id="KW-0597">Phosphoprotein</keyword>
<keyword id="KW-1267">Proteomics identification</keyword>
<keyword id="KW-1185">Reference proteome</keyword>
<keyword id="KW-0804">Transcription</keyword>
<keyword id="KW-0805">Transcription regulation</keyword>
<keyword id="KW-0832">Ubl conjugation</keyword>
<keyword id="KW-0862">Zinc</keyword>
<keyword id="KW-0863">Zinc-finger</keyword>
<accession>Q15560</accession>
<accession>B3KNM1</accession>
<accession>Q8TD37</accession>
<accession>Q8TD38</accession>
<comment type="function">
    <text evidence="6">Necessary for efficient RNA polymerase II transcription elongation past template-encoded arresting sites. The arresting sites in DNA have the property of trapping a certain fraction of elongating RNA polymerases that pass through, resulting in locked ternary complexes. Cleavage of the nascent transcript by S-II allows the resumption of elongation from the new 3'-terminus.</text>
</comment>
<comment type="subunit">
    <text evidence="7 9">Interacts with the basal transcription factor GTF2B. Interacts with REXO1.</text>
</comment>
<comment type="interaction">
    <interactant intactId="EBI-710310">
        <id>Q15560</id>
    </interactant>
    <interactant intactId="EBI-10173507">
        <id>Q6UY14-3</id>
        <label>ADAMTSL4</label>
    </interactant>
    <organismsDiffer>false</organismsDiffer>
    <experiments>3</experiments>
</comment>
<comment type="interaction">
    <interactant intactId="EBI-710310">
        <id>Q15560</id>
    </interactant>
    <interactant intactId="EBI-712648">
        <id>O95994</id>
        <label>AGR2</label>
    </interactant>
    <organismsDiffer>false</organismsDiffer>
    <experiments>3</experiments>
</comment>
<comment type="interaction">
    <interactant intactId="EBI-710310">
        <id>Q15560</id>
    </interactant>
    <interactant intactId="EBI-11522760">
        <id>Q6RW13-2</id>
        <label>AGTRAP</label>
    </interactant>
    <organismsDiffer>false</organismsDiffer>
    <experiments>3</experiments>
</comment>
<comment type="interaction">
    <interactant intactId="EBI-710310">
        <id>Q15560</id>
    </interactant>
    <interactant intactId="EBI-3905054">
        <id>P13196</id>
        <label>ALAS1</label>
    </interactant>
    <organismsDiffer>false</organismsDiffer>
    <experiments>3</experiments>
</comment>
<comment type="interaction">
    <interactant intactId="EBI-710310">
        <id>Q15560</id>
    </interactant>
    <interactant intactId="EBI-746752">
        <id>Q9Y2J4</id>
        <label>AMOTL2</label>
    </interactant>
    <organismsDiffer>false</organismsDiffer>
    <experiments>3</experiments>
</comment>
<comment type="interaction">
    <interactant intactId="EBI-710310">
        <id>Q15560</id>
    </interactant>
    <interactant intactId="EBI-12902762">
        <id>Q8N2F6-2</id>
        <label>ARMC10</label>
    </interactant>
    <organismsDiffer>false</organismsDiffer>
    <experiments>3</experiments>
</comment>
<comment type="interaction">
    <interactant intactId="EBI-710310">
        <id>Q15560</id>
    </interactant>
    <interactant intactId="EBI-4400025">
        <id>Q9Y2T1</id>
        <label>AXIN2</label>
    </interactant>
    <organismsDiffer>false</organismsDiffer>
    <experiments>3</experiments>
</comment>
<comment type="interaction">
    <interactant intactId="EBI-710310">
        <id>Q15560</id>
    </interactant>
    <interactant intactId="EBI-1642333">
        <id>Q9BYV9</id>
        <label>BACH2</label>
    </interactant>
    <organismsDiffer>false</organismsDiffer>
    <experiments>3</experiments>
</comment>
<comment type="interaction">
    <interactant intactId="EBI-710310">
        <id>Q15560</id>
    </interactant>
    <interactant intactId="EBI-11975051">
        <id>Q8TD16-2</id>
        <label>BICD2</label>
    </interactant>
    <organismsDiffer>false</organismsDiffer>
    <experiments>3</experiments>
</comment>
<comment type="interaction">
    <interactant intactId="EBI-710310">
        <id>Q15560</id>
    </interactant>
    <interactant intactId="EBI-11983447">
        <id>Q8N9W6-4</id>
        <label>BOLL</label>
    </interactant>
    <organismsDiffer>false</organismsDiffer>
    <experiments>3</experiments>
</comment>
<comment type="interaction">
    <interactant intactId="EBI-710310">
        <id>Q15560</id>
    </interactant>
    <interactant intactId="EBI-12012762">
        <id>Q96KE9-2</id>
        <label>BTBD6</label>
    </interactant>
    <organismsDiffer>false</organismsDiffer>
    <experiments>3</experiments>
</comment>
<comment type="interaction">
    <interactant intactId="EBI-710310">
        <id>Q15560</id>
    </interactant>
    <interactant intactId="EBI-11524851">
        <id>Q8NA61-2</id>
        <label>CBY2</label>
    </interactant>
    <organismsDiffer>false</organismsDiffer>
    <experiments>3</experiments>
</comment>
<comment type="interaction">
    <interactant intactId="EBI-710310">
        <id>Q15560</id>
    </interactant>
    <interactant intactId="EBI-10171416">
        <id>Q96JN2-2</id>
        <label>CCDC136</label>
    </interactant>
    <organismsDiffer>false</organismsDiffer>
    <experiments>3</experiments>
</comment>
<comment type="interaction">
    <interactant intactId="EBI-710310">
        <id>Q15560</id>
    </interactant>
    <interactant intactId="EBI-13289565">
        <id>Q569K6</id>
        <label>CCDC157</label>
    </interactant>
    <organismsDiffer>false</organismsDiffer>
    <experiments>3</experiments>
</comment>
<comment type="interaction">
    <interactant intactId="EBI-710310">
        <id>Q15560</id>
    </interactant>
    <interactant intactId="EBI-744115">
        <id>Q9C0F1</id>
        <label>CEP44</label>
    </interactant>
    <organismsDiffer>false</organismsDiffer>
    <experiments>3</experiments>
</comment>
<comment type="interaction">
    <interactant intactId="EBI-710310">
        <id>Q15560</id>
    </interactant>
    <interactant intactId="EBI-742887">
        <id>Q8TAP6</id>
        <label>CEP76</label>
    </interactant>
    <organismsDiffer>false</organismsDiffer>
    <experiments>3</experiments>
</comment>
<comment type="interaction">
    <interactant intactId="EBI-710310">
        <id>Q15560</id>
    </interactant>
    <interactant intactId="EBI-17278014">
        <id>Q8IZR5-2</id>
        <label>CMTM4</label>
    </interactant>
    <organismsDiffer>false</organismsDiffer>
    <experiments>3</experiments>
</comment>
<comment type="interaction">
    <interactant intactId="EBI-710310">
        <id>Q15560</id>
    </interactant>
    <interactant intactId="EBI-1054315">
        <id>Q9NX76</id>
        <label>CMTM6</label>
    </interactant>
    <organismsDiffer>false</organismsDiffer>
    <experiments>3</experiments>
</comment>
<comment type="interaction">
    <interactant intactId="EBI-710310">
        <id>Q15560</id>
    </interactant>
    <interactant intactId="EBI-947360">
        <id>Q8N137</id>
        <label>CNTROB</label>
    </interactant>
    <organismsDiffer>false</organismsDiffer>
    <experiments>3</experiments>
</comment>
<comment type="interaction">
    <interactant intactId="EBI-710310">
        <id>Q15560</id>
    </interactant>
    <interactant intactId="EBI-2834035">
        <id>Q5RI15</id>
        <label>COX20</label>
    </interactant>
    <organismsDiffer>false</organismsDiffer>
    <experiments>3</experiments>
</comment>
<comment type="interaction">
    <interactant intactId="EBI-710310">
        <id>Q15560</id>
    </interactant>
    <interactant intactId="EBI-3867333">
        <id>A8MQ03</id>
        <label>CYSRT1</label>
    </interactant>
    <organismsDiffer>false</organismsDiffer>
    <experiments>3</experiments>
</comment>
<comment type="interaction">
    <interactant intactId="EBI-710310">
        <id>Q15560</id>
    </interactant>
    <interactant intactId="EBI-7875264">
        <id>O75553</id>
        <label>DAB1</label>
    </interactant>
    <organismsDiffer>false</organismsDiffer>
    <experiments>3</experiments>
</comment>
<comment type="interaction">
    <interactant intactId="EBI-710310">
        <id>Q15560</id>
    </interactant>
    <interactant intactId="EBI-1055572">
        <id>P17661</id>
        <label>DES</label>
    </interactant>
    <organismsDiffer>false</organismsDiffer>
    <experiments>3</experiments>
</comment>
<comment type="interaction">
    <interactant intactId="EBI-710310">
        <id>Q15560</id>
    </interactant>
    <interactant intactId="EBI-739789">
        <id>Q92997</id>
        <label>DVL3</label>
    </interactant>
    <organismsDiffer>false</organismsDiffer>
    <experiments>3</experiments>
</comment>
<comment type="interaction">
    <interactant intactId="EBI-710310">
        <id>Q15560</id>
    </interactant>
    <interactant intactId="EBI-769261">
        <id>Q96JC9</id>
        <label>EAF1</label>
    </interactant>
    <organismsDiffer>false</organismsDiffer>
    <experiments>3</experiments>
</comment>
<comment type="interaction">
    <interactant intactId="EBI-710310">
        <id>Q15560</id>
    </interactant>
    <interactant intactId="EBI-1245604">
        <id>Q96CJ1</id>
        <label>EAF2</label>
    </interactant>
    <organismsDiffer>false</organismsDiffer>
    <experiments>3</experiments>
</comment>
<comment type="interaction">
    <interactant intactId="EBI-710310">
        <id>Q15560</id>
    </interactant>
    <interactant intactId="EBI-371922">
        <id>Q96B26</id>
        <label>EXOSC8</label>
    </interactant>
    <organismsDiffer>false</organismsDiffer>
    <experiments>3</experiments>
</comment>
<comment type="interaction">
    <interactant intactId="EBI-710310">
        <id>Q15560</id>
    </interactant>
    <interactant intactId="EBI-494804">
        <id>Q13158</id>
        <label>FADD</label>
    </interactant>
    <organismsDiffer>false</organismsDiffer>
    <experiments>3</experiments>
</comment>
<comment type="interaction">
    <interactant intactId="EBI-710310">
        <id>Q15560</id>
    </interactant>
    <interactant intactId="EBI-10175124">
        <id>Q8IZU0</id>
        <label>FAM9B</label>
    </interactant>
    <organismsDiffer>false</organismsDiffer>
    <experiments>3</experiments>
</comment>
<comment type="interaction">
    <interactant intactId="EBI-710310">
        <id>Q15560</id>
    </interactant>
    <interactant intactId="EBI-11977403">
        <id>A0A0C3SFZ9</id>
        <label>FCHO1</label>
    </interactant>
    <organismsDiffer>false</organismsDiffer>
    <experiments>3</experiments>
</comment>
<comment type="interaction">
    <interactant intactId="EBI-710310">
        <id>Q15560</id>
    </interactant>
    <interactant intactId="EBI-11022345">
        <id>P51114-2</id>
        <label>FXR1</label>
    </interactant>
    <organismsDiffer>false</organismsDiffer>
    <experiments>3</experiments>
</comment>
<comment type="interaction">
    <interactant intactId="EBI-710310">
        <id>Q15560</id>
    </interactant>
    <interactant intactId="EBI-1052570">
        <id>O95995</id>
        <label>GAS8</label>
    </interactant>
    <organismsDiffer>false</organismsDiffer>
    <experiments>3</experiments>
</comment>
<comment type="interaction">
    <interactant intactId="EBI-710310">
        <id>Q15560</id>
    </interactant>
    <interactant intactId="EBI-947774">
        <id>O75420</id>
        <label>GIGYF1</label>
    </interactant>
    <organismsDiffer>false</organismsDiffer>
    <experiments>3</experiments>
</comment>
<comment type="interaction">
    <interactant intactId="EBI-710310">
        <id>Q15560</id>
    </interactant>
    <interactant intactId="EBI-618309">
        <id>Q08379</id>
        <label>GOLGA2</label>
    </interactant>
    <organismsDiffer>false</organismsDiffer>
    <experiments>6</experiments>
</comment>
<comment type="interaction">
    <interactant intactId="EBI-710310">
        <id>Q15560</id>
    </interactant>
    <interactant intactId="EBI-746309">
        <id>Q92917</id>
        <label>GPKOW</label>
    </interactant>
    <organismsDiffer>false</organismsDiffer>
    <experiments>7</experiments>
</comment>
<comment type="interaction">
    <interactant intactId="EBI-710310">
        <id>Q15560</id>
    </interactant>
    <interactant intactId="EBI-11519926">
        <id>Q6PI77</id>
        <label>GPRASP3</label>
    </interactant>
    <organismsDiffer>false</organismsDiffer>
    <experiments>3</experiments>
</comment>
<comment type="interaction">
    <interactant intactId="EBI-710310">
        <id>Q15560</id>
    </interactant>
    <interactant intactId="EBI-717919">
        <id>Q4V328</id>
        <label>GRIPAP1</label>
    </interactant>
    <organismsDiffer>false</organismsDiffer>
    <experiments>3</experiments>
</comment>
<comment type="interaction">
    <interactant intactId="EBI-710310">
        <id>Q15560</id>
    </interactant>
    <interactant intactId="EBI-12163087">
        <id>Q9BYE0</id>
        <label>HES7</label>
    </interactant>
    <organismsDiffer>false</organismsDiffer>
    <experiments>3</experiments>
</comment>
<comment type="interaction">
    <interactant intactId="EBI-710310">
        <id>Q15560</id>
    </interactant>
    <interactant intactId="EBI-12809676">
        <id>A8MV81</id>
        <label>HIGD1C</label>
    </interactant>
    <organismsDiffer>false</organismsDiffer>
    <experiments>3</experiments>
</comment>
<comment type="interaction">
    <interactant intactId="EBI-710310">
        <id>Q15560</id>
    </interactant>
    <interactant intactId="EBI-473886">
        <id>O00291</id>
        <label>HIP1</label>
    </interactant>
    <organismsDiffer>false</organismsDiffer>
    <experiments>3</experiments>
</comment>
<comment type="interaction">
    <interactant intactId="EBI-710310">
        <id>Q15560</id>
    </interactant>
    <interactant intactId="EBI-2549423">
        <id>Q6NT76</id>
        <label>HMBOX1</label>
    </interactant>
    <organismsDiffer>false</organismsDiffer>
    <experiments>3</experiments>
</comment>
<comment type="interaction">
    <interactant intactId="EBI-710310">
        <id>Q15560</id>
    </interactant>
    <interactant intactId="EBI-7116203">
        <id>O75031</id>
        <label>HSF2BP</label>
    </interactant>
    <organismsDiffer>false</organismsDiffer>
    <experiments>3</experiments>
</comment>
<comment type="interaction">
    <interactant intactId="EBI-710310">
        <id>Q15560</id>
    </interactant>
    <interactant intactId="EBI-11522367">
        <id>Q13422-7</id>
        <label>IKZF1</label>
    </interactant>
    <organismsDiffer>false</organismsDiffer>
    <experiments>3</experiments>
</comment>
<comment type="interaction">
    <interactant intactId="EBI-710310">
        <id>Q15560</id>
    </interactant>
    <interactant intactId="EBI-1640423">
        <id>Q9H2S9</id>
        <label>IKZF4</label>
    </interactant>
    <organismsDiffer>false</organismsDiffer>
    <experiments>3</experiments>
</comment>
<comment type="interaction">
    <interactant intactId="EBI-710310">
        <id>Q15560</id>
    </interactant>
    <interactant intactId="EBI-6918743">
        <id>Q9H3M0</id>
        <label>KCNF1</label>
    </interactant>
    <organismsDiffer>false</organismsDiffer>
    <experiments>3</experiments>
</comment>
<comment type="interaction">
    <interactant intactId="EBI-710310">
        <id>Q15560</id>
    </interactant>
    <interactant intactId="EBI-2505886">
        <id>Q9H3F6</id>
        <label>KCTD10</label>
    </interactant>
    <organismsDiffer>false</organismsDiffer>
    <experiments>3</experiments>
</comment>
<comment type="interaction">
    <interactant intactId="EBI-710310">
        <id>Q15560</id>
    </interactant>
    <interactant intactId="EBI-11954971">
        <id>Q96MP8-2</id>
        <label>KCTD7</label>
    </interactant>
    <organismsDiffer>false</organismsDiffer>
    <experiments>3</experiments>
</comment>
<comment type="interaction">
    <interactant intactId="EBI-710310">
        <id>Q15560</id>
    </interactant>
    <interactant intactId="EBI-10181113">
        <id>Q8N8K9</id>
        <label>KIAA1958</label>
    </interactant>
    <organismsDiffer>false</organismsDiffer>
    <experiments>6</experiments>
</comment>
<comment type="interaction">
    <interactant intactId="EBI-710310">
        <id>Q15560</id>
    </interactant>
    <interactant intactId="EBI-10171697">
        <id>Q6A162</id>
        <label>KRT40</label>
    </interactant>
    <organismsDiffer>false</organismsDiffer>
    <experiments>3</experiments>
</comment>
<comment type="interaction">
    <interactant intactId="EBI-710310">
        <id>Q15560</id>
    </interactant>
    <interactant intactId="EBI-10172290">
        <id>P60409</id>
        <label>KRTAP10-7</label>
    </interactant>
    <organismsDiffer>false</organismsDiffer>
    <experiments>3</experiments>
</comment>
<comment type="interaction">
    <interactant intactId="EBI-710310">
        <id>Q15560</id>
    </interactant>
    <interactant intactId="EBI-10171774">
        <id>P60410</id>
        <label>KRTAP10-8</label>
    </interactant>
    <organismsDiffer>false</organismsDiffer>
    <experiments>3</experiments>
</comment>
<comment type="interaction">
    <interactant intactId="EBI-710310">
        <id>Q15560</id>
    </interactant>
    <interactant intactId="EBI-10176379">
        <id>P59991</id>
        <label>KRTAP12-2</label>
    </interactant>
    <organismsDiffer>false</organismsDiffer>
    <experiments>3</experiments>
</comment>
<comment type="interaction">
    <interactant intactId="EBI-710310">
        <id>Q15560</id>
    </interactant>
    <interactant intactId="EBI-11953334">
        <id>P60328</id>
        <label>KRTAP12-3</label>
    </interactant>
    <organismsDiffer>false</organismsDiffer>
    <experiments>3</experiments>
</comment>
<comment type="interaction">
    <interactant intactId="EBI-710310">
        <id>Q15560</id>
    </interactant>
    <interactant intactId="EBI-3958099">
        <id>P26371</id>
        <label>KRTAP5-9</label>
    </interactant>
    <organismsDiffer>false</organismsDiffer>
    <experiments>3</experiments>
</comment>
<comment type="interaction">
    <interactant intactId="EBI-710310">
        <id>Q15560</id>
    </interactant>
    <interactant intactId="EBI-739657">
        <id>Q9BQD3</id>
        <label>KXD1</label>
    </interactant>
    <organismsDiffer>false</organismsDiffer>
    <experiments>3</experiments>
</comment>
<comment type="interaction">
    <interactant intactId="EBI-710310">
        <id>Q15560</id>
    </interactant>
    <interactant intactId="EBI-12864460">
        <id>P48059-3</id>
        <label>LIMS1</label>
    </interactant>
    <organismsDiffer>false</organismsDiffer>
    <experiments>3</experiments>
</comment>
<comment type="interaction">
    <interactant intactId="EBI-710310">
        <id>Q15560</id>
    </interactant>
    <interactant intactId="EBI-1216080">
        <id>Q9Y250</id>
        <label>LZTS1</label>
    </interactant>
    <organismsDiffer>false</organismsDiffer>
    <experiments>3</experiments>
</comment>
<comment type="interaction">
    <interactant intactId="EBI-710310">
        <id>Q15560</id>
    </interactant>
    <interactant intactId="EBI-741037">
        <id>Q9BRK4</id>
        <label>LZTS2</label>
    </interactant>
    <organismsDiffer>false</organismsDiffer>
    <experiments>3</experiments>
</comment>
<comment type="interaction">
    <interactant intactId="EBI-710310">
        <id>Q15560</id>
    </interactant>
    <interactant intactId="EBI-739552">
        <id>P43364</id>
        <label>MAGEA11</label>
    </interactant>
    <organismsDiffer>false</organismsDiffer>
    <experiments>5</experiments>
</comment>
<comment type="interaction">
    <interactant intactId="EBI-710310">
        <id>Q15560</id>
    </interactant>
    <interactant intactId="EBI-707595">
        <id>P27448</id>
        <label>MARK3</label>
    </interactant>
    <organismsDiffer>false</organismsDiffer>
    <experiments>2</experiments>
</comment>
<comment type="interaction">
    <interactant intactId="EBI-710310">
        <id>Q15560</id>
    </interactant>
    <interactant intactId="EBI-307531">
        <id>P23508</id>
        <label>MCC</label>
    </interactant>
    <organismsDiffer>false</organismsDiffer>
    <experiments>3</experiments>
</comment>
<comment type="interaction">
    <interactant intactId="EBI-710310">
        <id>Q15560</id>
    </interactant>
    <interactant intactId="EBI-722444">
        <id>P21741</id>
        <label>MDK</label>
    </interactant>
    <organismsDiffer>false</organismsDiffer>
    <experiments>3</experiments>
</comment>
<comment type="interaction">
    <interactant intactId="EBI-710310">
        <id>Q15560</id>
    </interactant>
    <interactant intactId="EBI-748397">
        <id>P50222</id>
        <label>MEOX2</label>
    </interactant>
    <organismsDiffer>false</organismsDiffer>
    <experiments>3</experiments>
</comment>
<comment type="interaction">
    <interactant intactId="EBI-710310">
        <id>Q15560</id>
    </interactant>
    <interactant intactId="EBI-16439278">
        <id>Q6FHY5</id>
        <label>MEOX2</label>
    </interactant>
    <organismsDiffer>false</organismsDiffer>
    <experiments>3</experiments>
</comment>
<comment type="interaction">
    <interactant intactId="EBI-710310">
        <id>Q15560</id>
    </interactant>
    <interactant intactId="EBI-10172526">
        <id>Q9UJV3-2</id>
        <label>MID2</label>
    </interactant>
    <organismsDiffer>false</organismsDiffer>
    <experiments>3</experiments>
</comment>
<comment type="interaction">
    <interactant intactId="EBI-710310">
        <id>Q15560</id>
    </interactant>
    <interactant intactId="EBI-2340269">
        <id>Q13064</id>
        <label>MKRN3</label>
    </interactant>
    <organismsDiffer>false</organismsDiffer>
    <experiments>3</experiments>
</comment>
<comment type="interaction">
    <interactant intactId="EBI-710310">
        <id>Q15560</id>
    </interactant>
    <interactant intactId="EBI-7850168">
        <id>Q8NCY6</id>
        <label>MSANTD4</label>
    </interactant>
    <organismsDiffer>false</organismsDiffer>
    <experiments>3</experiments>
</comment>
<comment type="interaction">
    <interactant intactId="EBI-710310">
        <id>Q15560</id>
    </interactant>
    <interactant intactId="EBI-11522433">
        <id>Q5JR59-3</id>
        <label>MTUS2</label>
    </interactant>
    <organismsDiffer>false</organismsDiffer>
    <experiments>3</experiments>
</comment>
<comment type="interaction">
    <interactant intactId="EBI-710310">
        <id>Q15560</id>
    </interactant>
    <interactant intactId="EBI-8641936">
        <id>Q15742</id>
        <label>NAB2</label>
    </interactant>
    <organismsDiffer>false</organismsDiffer>
    <experiments>3</experiments>
</comment>
<comment type="interaction">
    <interactant intactId="EBI-710310">
        <id>Q15560</id>
    </interactant>
    <interactant intactId="EBI-11956853">
        <id>Q8N987</id>
        <label>NECAB1</label>
    </interactant>
    <organismsDiffer>false</organismsDiffer>
    <experiments>3</experiments>
</comment>
<comment type="interaction">
    <interactant intactId="EBI-710310">
        <id>Q15560</id>
    </interactant>
    <interactant intactId="EBI-10172876">
        <id>Q7Z6G3-2</id>
        <label>NECAB2</label>
    </interactant>
    <organismsDiffer>false</organismsDiffer>
    <experiments>3</experiments>
</comment>
<comment type="interaction">
    <interactant intactId="EBI-710310">
        <id>Q15560</id>
    </interactant>
    <interactant intactId="EBI-1051317">
        <id>Q9H4L5</id>
        <label>OSBPL3</label>
    </interactant>
    <organismsDiffer>false</organismsDiffer>
    <experiments>3</experiments>
</comment>
<comment type="interaction">
    <interactant intactId="EBI-710310">
        <id>Q15560</id>
    </interactant>
    <interactant intactId="EBI-14066006">
        <id>Q4G0R1</id>
        <label>PIBF1</label>
    </interactant>
    <organismsDiffer>false</organismsDiffer>
    <experiments>3</experiments>
</comment>
<comment type="interaction">
    <interactant intactId="EBI-710310">
        <id>Q15560</id>
    </interactant>
    <interactant intactId="EBI-79165">
        <id>Q9NRD5</id>
        <label>PICK1</label>
    </interactant>
    <organismsDiffer>false</organismsDiffer>
    <experiments>3</experiments>
</comment>
<comment type="interaction">
    <interactant intactId="EBI-710310">
        <id>Q15560</id>
    </interactant>
    <interactant intactId="EBI-10232538">
        <id>Q8WWB5</id>
        <label>PIH1D2</label>
    </interactant>
    <organismsDiffer>false</organismsDiffer>
    <experiments>3</experiments>
</comment>
<comment type="interaction">
    <interactant intactId="EBI-710310">
        <id>Q15560</id>
    </interactant>
    <interactant intactId="EBI-302345">
        <id>Q8ND90</id>
        <label>PNMA1</label>
    </interactant>
    <organismsDiffer>false</organismsDiffer>
    <experiments>3</experiments>
</comment>
<comment type="interaction">
    <interactant intactId="EBI-710310">
        <id>Q15560</id>
    </interactant>
    <interactant intactId="EBI-10171633">
        <id>Q96PV4</id>
        <label>PNMA5</label>
    </interactant>
    <organismsDiffer>false</organismsDiffer>
    <experiments>3</experiments>
</comment>
<comment type="interaction">
    <interactant intactId="EBI-710310">
        <id>Q15560</id>
    </interactant>
    <interactant intactId="EBI-12029004">
        <id>P78424</id>
        <label>POU6F2</label>
    </interactant>
    <organismsDiffer>false</organismsDiffer>
    <experiments>3</experiments>
</comment>
<comment type="interaction">
    <interactant intactId="EBI-710310">
        <id>Q15560</id>
    </interactant>
    <interactant intactId="EBI-752074">
        <id>P41219</id>
        <label>PRPH</label>
    </interactant>
    <organismsDiffer>false</organismsDiffer>
    <experiments>3</experiments>
</comment>
<comment type="interaction">
    <interactant intactId="EBI-710310">
        <id>Q15560</id>
    </interactant>
    <interactant intactId="EBI-740343">
        <id>Q93062-3</id>
        <label>RBPMS</label>
    </interactant>
    <organismsDiffer>false</organismsDiffer>
    <experiments>3</experiments>
</comment>
<comment type="interaction">
    <interactant intactId="EBI-710310">
        <id>Q15560</id>
    </interactant>
    <interactant intactId="EBI-10192441">
        <id>Q86VR2</id>
        <label>RETREG3</label>
    </interactant>
    <organismsDiffer>false</organismsDiffer>
    <experiments>3</experiments>
</comment>
<comment type="interaction">
    <interactant intactId="EBI-710310">
        <id>Q15560</id>
    </interactant>
    <interactant intactId="EBI-12023020">
        <id>Q96KG9-4</id>
        <label>SCYL1</label>
    </interactant>
    <organismsDiffer>false</organismsDiffer>
    <experiments>3</experiments>
</comment>
<comment type="interaction">
    <interactant intactId="EBI-710310">
        <id>Q15560</id>
    </interactant>
    <interactant intactId="EBI-10172867">
        <id>A1L4H1</id>
        <label>SSC5D</label>
    </interactant>
    <organismsDiffer>false</organismsDiffer>
    <experiments>3</experiments>
</comment>
<comment type="interaction">
    <interactant intactId="EBI-710310">
        <id>Q15560</id>
    </interactant>
    <interactant intactId="EBI-745680">
        <id>Q96MF2</id>
        <label>STAC3</label>
    </interactant>
    <organismsDiffer>false</organismsDiffer>
    <experiments>3</experiments>
</comment>
<comment type="interaction">
    <interactant intactId="EBI-710310">
        <id>Q15560</id>
    </interactant>
    <interactant intactId="EBI-714135">
        <id>O75558</id>
        <label>STX11</label>
    </interactant>
    <organismsDiffer>false</organismsDiffer>
    <experiments>3</experiments>
</comment>
<comment type="interaction">
    <interactant intactId="EBI-710310">
        <id>Q15560</id>
    </interactant>
    <interactant intactId="EBI-12099160">
        <id>Q8N205-2</id>
        <label>SYNE4</label>
    </interactant>
    <organismsDiffer>false</organismsDiffer>
    <experiments>3</experiments>
</comment>
<comment type="interaction">
    <interactant intactId="EBI-710310">
        <id>Q15560</id>
    </interactant>
    <interactant intactId="EBI-978581">
        <id>Q15633</id>
        <label>TARBP2</label>
    </interactant>
    <organismsDiffer>false</organismsDiffer>
    <experiments>3</experiments>
</comment>
<comment type="interaction">
    <interactant intactId="EBI-710310">
        <id>Q15560</id>
    </interactant>
    <interactant intactId="EBI-529518">
        <id>Q86VP1</id>
        <label>TAX1BP1</label>
    </interactant>
    <organismsDiffer>false</organismsDiffer>
    <experiments>3</experiments>
</comment>
<comment type="interaction">
    <interactant intactId="EBI-710310">
        <id>Q15560</id>
    </interactant>
    <interactant intactId="EBI-1644036">
        <id>Q86TI0</id>
        <label>TBC1D1</label>
    </interactant>
    <organismsDiffer>false</organismsDiffer>
    <experiments>3</experiments>
</comment>
<comment type="interaction">
    <interactant intactId="EBI-710310">
        <id>Q15560</id>
    </interactant>
    <interactant intactId="EBI-533224">
        <id>P15884</id>
        <label>TCF4</label>
    </interactant>
    <organismsDiffer>false</organismsDiffer>
    <experiments>3</experiments>
</comment>
<comment type="interaction">
    <interactant intactId="EBI-710310">
        <id>Q15560</id>
    </interactant>
    <interactant intactId="EBI-11139477">
        <id>Q96N21</id>
        <label>TEPSIN</label>
    </interactant>
    <organismsDiffer>false</organismsDiffer>
    <experiments>3</experiments>
</comment>
<comment type="interaction">
    <interactant intactId="EBI-710310">
        <id>Q15560</id>
    </interactant>
    <interactant intactId="EBI-717422">
        <id>Q12800</id>
        <label>TFCP2</label>
    </interactant>
    <organismsDiffer>false</organismsDiffer>
    <experiments>3</experiments>
</comment>
<comment type="interaction">
    <interactant intactId="EBI-710310">
        <id>Q15560</id>
    </interactant>
    <interactant intactId="EBI-741515">
        <id>Q9NVV9</id>
        <label>THAP1</label>
    </interactant>
    <organismsDiffer>false</organismsDiffer>
    <experiments>6</experiments>
</comment>
<comment type="interaction">
    <interactant intactId="EBI-710310">
        <id>Q15560</id>
    </interactant>
    <interactant intactId="EBI-12886878">
        <id>Q6P5X7-2</id>
        <label>TMEM71</label>
    </interactant>
    <organismsDiffer>false</organismsDiffer>
    <experiments>3</experiments>
</comment>
<comment type="interaction">
    <interactant intactId="EBI-710310">
        <id>Q15560</id>
    </interactant>
    <interactant intactId="EBI-357849">
        <id>Q15025</id>
        <label>TNIP1</label>
    </interactant>
    <organismsDiffer>false</organismsDiffer>
    <experiments>8</experiments>
</comment>
<comment type="interaction">
    <interactant intactId="EBI-710310">
        <id>Q15560</id>
    </interactant>
    <interactant intactId="EBI-12815137">
        <id>Q96NM4-3</id>
        <label>TOX2</label>
    </interactant>
    <organismsDiffer>false</organismsDiffer>
    <experiments>3</experiments>
</comment>
<comment type="interaction">
    <interactant intactId="EBI-710310">
        <id>Q15560</id>
    </interactant>
    <interactant intactId="EBI-359224">
        <id>Q13077</id>
        <label>TRAF1</label>
    </interactant>
    <organismsDiffer>false</organismsDiffer>
    <experiments>3</experiments>
</comment>
<comment type="interaction">
    <interactant intactId="EBI-710310">
        <id>Q15560</id>
    </interactant>
    <interactant intactId="EBI-355744">
        <id>Q12933</id>
        <label>TRAF2</label>
    </interactant>
    <organismsDiffer>false</organismsDiffer>
    <experiments>7</experiments>
</comment>
<comment type="interaction">
    <interactant intactId="EBI-710310">
        <id>Q15560</id>
    </interactant>
    <interactant intactId="EBI-740098">
        <id>P36406</id>
        <label>TRIM23</label>
    </interactant>
    <organismsDiffer>false</organismsDiffer>
    <experiments>3</experiments>
</comment>
<comment type="interaction">
    <interactant intactId="EBI-710310">
        <id>Q15560</id>
    </interactant>
    <interactant intactId="EBI-719493">
        <id>P14373</id>
        <label>TRIM27</label>
    </interactant>
    <organismsDiffer>false</organismsDiffer>
    <experiments>6</experiments>
</comment>
<comment type="interaction">
    <interactant intactId="EBI-710310">
        <id>Q15560</id>
    </interactant>
    <interactant intactId="EBI-2130415">
        <id>O00635</id>
        <label>TRIM38</label>
    </interactant>
    <organismsDiffer>false</organismsDiffer>
    <experiments>3</experiments>
</comment>
<comment type="interaction">
    <interactant intactId="EBI-710310">
        <id>Q15560</id>
    </interactant>
    <interactant intactId="EBI-725997">
        <id>Q8WV44</id>
        <label>TRIM41</label>
    </interactant>
    <organismsDiffer>false</organismsDiffer>
    <experiments>3</experiments>
</comment>
<comment type="interaction">
    <interactant intactId="EBI-710310">
        <id>Q15560</id>
    </interactant>
    <interactant intactId="EBI-2130429">
        <id>Q9BYV2</id>
        <label>TRIM54</label>
    </interactant>
    <organismsDiffer>false</organismsDiffer>
    <experiments>6</experiments>
</comment>
<comment type="interaction">
    <interactant intactId="EBI-710310">
        <id>Q15560</id>
    </interactant>
    <interactant intactId="EBI-744794">
        <id>Q9BZW7</id>
        <label>TSGA10</label>
    </interactant>
    <organismsDiffer>false</organismsDiffer>
    <experiments>3</experiments>
</comment>
<comment type="interaction">
    <interactant intactId="EBI-710310">
        <id>Q15560</id>
    </interactant>
    <interactant intactId="EBI-11975223">
        <id>Q70EL1-9</id>
        <label>USP54</label>
    </interactant>
    <organismsDiffer>false</organismsDiffer>
    <experiments>3</experiments>
</comment>
<comment type="interaction">
    <interactant intactId="EBI-710310">
        <id>Q15560</id>
    </interactant>
    <interactant intactId="EBI-353844">
        <id>P08670</id>
        <label>VIM</label>
    </interactant>
    <organismsDiffer>false</organismsDiffer>
    <experiments>3</experiments>
</comment>
<comment type="interaction">
    <interactant intactId="EBI-710310">
        <id>Q15560</id>
    </interactant>
    <interactant intactId="EBI-723574">
        <id>O15209</id>
        <label>ZBTB22</label>
    </interactant>
    <organismsDiffer>false</organismsDiffer>
    <experiments>3</experiments>
</comment>
<comment type="interaction">
    <interactant intactId="EBI-710310">
        <id>Q15560</id>
    </interactant>
    <interactant intactId="EBI-740718">
        <id>O43298</id>
        <label>ZBTB43</label>
    </interactant>
    <organismsDiffer>false</organismsDiffer>
    <experiments>3</experiments>
</comment>
<comment type="interaction">
    <interactant intactId="EBI-710310">
        <id>Q15560</id>
    </interactant>
    <interactant intactId="EBI-742740">
        <id>Q96BR9</id>
        <label>ZBTB8A</label>
    </interactant>
    <organismsDiffer>false</organismsDiffer>
    <experiments>3</experiments>
</comment>
<comment type="interaction">
    <interactant intactId="EBI-710310">
        <id>Q15560</id>
    </interactant>
    <interactant intactId="EBI-395708">
        <id>Q96C00</id>
        <label>ZBTB9</label>
    </interactant>
    <organismsDiffer>false</organismsDiffer>
    <experiments>3</experiments>
</comment>
<comment type="interaction">
    <interactant intactId="EBI-710310">
        <id>Q15560</id>
    </interactant>
    <interactant intactId="EBI-2602314">
        <id>Q15776</id>
        <label>ZKSCAN8</label>
    </interactant>
    <organismsDiffer>false</organismsDiffer>
    <experiments>3</experiments>
</comment>
<comment type="interaction">
    <interactant intactId="EBI-710310">
        <id>Q15560</id>
    </interactant>
    <interactant intactId="EBI-11035148">
        <id>Q8TF50</id>
        <label>ZNF526</label>
    </interactant>
    <organismsDiffer>false</organismsDiffer>
    <experiments>3</experiments>
</comment>
<comment type="interaction">
    <interactant intactId="EBI-710310">
        <id>Q15560</id>
    </interactant>
    <interactant intactId="EBI-527853">
        <id>Q9UGI0</id>
        <label>ZRANB1</label>
    </interactant>
    <organismsDiffer>false</organismsDiffer>
    <experiments>3</experiments>
</comment>
<comment type="subcellular location">
    <subcellularLocation>
        <location>Nucleus</location>
    </subcellularLocation>
</comment>
<comment type="alternative products">
    <event type="alternative splicing"/>
    <isoform>
        <id>Q15560-1</id>
        <name>1</name>
        <sequence type="displayed"/>
    </isoform>
    <isoform>
        <id>Q15560-2</id>
        <name>2</name>
        <sequence type="described" ref="VSP_047345"/>
    </isoform>
</comment>
<comment type="tissue specificity">
    <text evidence="9">Testis and ovary specific.</text>
</comment>
<comment type="similarity">
    <text evidence="11">Belongs to the TFS-II family.</text>
</comment>
<comment type="caution">
    <text evidence="11">It is uncertain whether Met-1 or Met-2 is the initiator.</text>
</comment>
<evidence type="ECO:0000250" key="1">
    <source>
        <dbReference type="UniProtKB" id="P23193"/>
    </source>
</evidence>
<evidence type="ECO:0000255" key="2">
    <source>
        <dbReference type="PROSITE-ProRule" id="PRU00472"/>
    </source>
</evidence>
<evidence type="ECO:0000255" key="3">
    <source>
        <dbReference type="PROSITE-ProRule" id="PRU00649"/>
    </source>
</evidence>
<evidence type="ECO:0000255" key="4">
    <source>
        <dbReference type="PROSITE-ProRule" id="PRU00651"/>
    </source>
</evidence>
<evidence type="ECO:0000256" key="5">
    <source>
        <dbReference type="SAM" id="MobiDB-lite"/>
    </source>
</evidence>
<evidence type="ECO:0000269" key="6">
    <source>
    </source>
</evidence>
<evidence type="ECO:0000269" key="7">
    <source>
    </source>
</evidence>
<evidence type="ECO:0000269" key="8">
    <source>
    </source>
</evidence>
<evidence type="ECO:0000269" key="9">
    <source>
    </source>
</evidence>
<evidence type="ECO:0000303" key="10">
    <source>
    </source>
</evidence>
<evidence type="ECO:0000305" key="11"/>
<evidence type="ECO:0007829" key="12">
    <source>
        <dbReference type="PDB" id="2LW4"/>
    </source>
</evidence>
<dbReference type="EMBL" id="D50495">
    <property type="protein sequence ID" value="BAA09089.1"/>
    <property type="molecule type" value="mRNA"/>
</dbReference>
<dbReference type="EMBL" id="AK027824">
    <property type="protein sequence ID" value="BAG51383.1"/>
    <property type="molecule type" value="mRNA"/>
</dbReference>
<dbReference type="EMBL" id="AL590548">
    <property type="status" value="NOT_ANNOTATED_CDS"/>
    <property type="molecule type" value="Genomic_DNA"/>
</dbReference>
<dbReference type="EMBL" id="BC018896">
    <property type="protein sequence ID" value="AAH18896.1"/>
    <property type="molecule type" value="mRNA"/>
</dbReference>
<dbReference type="EMBL" id="U86749">
    <property type="protein sequence ID" value="AAC39553.1"/>
    <property type="molecule type" value="Genomic_DNA"/>
</dbReference>
<dbReference type="CCDS" id="CCDS13553.1">
    <molecule id="Q15560-1"/>
</dbReference>
<dbReference type="CCDS" id="CCDS13554.1">
    <molecule id="Q15560-2"/>
</dbReference>
<dbReference type="PIR" id="JC4577">
    <property type="entry name" value="JC4577"/>
</dbReference>
<dbReference type="RefSeq" id="NP_003186.1">
    <molecule id="Q15560-1"/>
    <property type="nucleotide sequence ID" value="NM_003195.6"/>
</dbReference>
<dbReference type="RefSeq" id="NP_942016.1">
    <molecule id="Q15560-2"/>
    <property type="nucleotide sequence ID" value="NM_198723.2"/>
</dbReference>
<dbReference type="RefSeq" id="XP_016883525.1">
    <property type="nucleotide sequence ID" value="XM_017028036.1"/>
</dbReference>
<dbReference type="RefSeq" id="XP_016883526.1">
    <property type="nucleotide sequence ID" value="XM_017028037.1"/>
</dbReference>
<dbReference type="RefSeq" id="XP_047296397.1">
    <molecule id="Q15560-2"/>
    <property type="nucleotide sequence ID" value="XM_047440441.1"/>
</dbReference>
<dbReference type="RefSeq" id="XP_047296398.1">
    <molecule id="Q15560-2"/>
    <property type="nucleotide sequence ID" value="XM_047440442.1"/>
</dbReference>
<dbReference type="RefSeq" id="XP_054179931.1">
    <molecule id="Q15560-2"/>
    <property type="nucleotide sequence ID" value="XM_054323956.1"/>
</dbReference>
<dbReference type="RefSeq" id="XP_054179932.1">
    <molecule id="Q15560-2"/>
    <property type="nucleotide sequence ID" value="XM_054323957.1"/>
</dbReference>
<dbReference type="PDB" id="2LW4">
    <property type="method" value="NMR"/>
    <property type="chains" value="A=130-239"/>
</dbReference>
<dbReference type="PDBsum" id="2LW4"/>
<dbReference type="BMRB" id="Q15560"/>
<dbReference type="SMR" id="Q15560"/>
<dbReference type="BioGRID" id="112781">
    <property type="interactions" value="164"/>
</dbReference>
<dbReference type="FunCoup" id="Q15560">
    <property type="interactions" value="2542"/>
</dbReference>
<dbReference type="IntAct" id="Q15560">
    <property type="interactions" value="130"/>
</dbReference>
<dbReference type="MINT" id="Q15560"/>
<dbReference type="STRING" id="9606.ENSP00000343515"/>
<dbReference type="GlyGen" id="Q15560">
    <property type="glycosylation" value="1 site, 1 O-linked glycan (1 site)"/>
</dbReference>
<dbReference type="iPTMnet" id="Q15560"/>
<dbReference type="PhosphoSitePlus" id="Q15560"/>
<dbReference type="BioMuta" id="TCEA2"/>
<dbReference type="DMDM" id="28380177"/>
<dbReference type="jPOST" id="Q15560"/>
<dbReference type="MassIVE" id="Q15560"/>
<dbReference type="PaxDb" id="9606-ENSP00000343515"/>
<dbReference type="PeptideAtlas" id="Q15560"/>
<dbReference type="ProteomicsDB" id="60633">
    <molecule id="Q15560-1"/>
</dbReference>
<dbReference type="Pumba" id="Q15560"/>
<dbReference type="Antibodypedia" id="15504">
    <property type="antibodies" value="132 antibodies from 17 providers"/>
</dbReference>
<dbReference type="DNASU" id="6919"/>
<dbReference type="Ensembl" id="ENST00000343484.10">
    <molecule id="Q15560-1"/>
    <property type="protein sequence ID" value="ENSP00000343515.5"/>
    <property type="gene ID" value="ENSG00000171703.17"/>
</dbReference>
<dbReference type="Ensembl" id="ENST00000361317.6">
    <molecule id="Q15560-2"/>
    <property type="protein sequence ID" value="ENSP00000354552.2"/>
    <property type="gene ID" value="ENSG00000171703.17"/>
</dbReference>
<dbReference type="GeneID" id="6919"/>
<dbReference type="KEGG" id="hsa:6919"/>
<dbReference type="MANE-Select" id="ENST00000343484.10">
    <property type="protein sequence ID" value="ENSP00000343515.5"/>
    <property type="RefSeq nucleotide sequence ID" value="NM_003195.6"/>
    <property type="RefSeq protein sequence ID" value="NP_003186.1"/>
</dbReference>
<dbReference type="UCSC" id="uc061yqt.1">
    <molecule id="Q15560-1"/>
    <property type="organism name" value="human"/>
</dbReference>
<dbReference type="AGR" id="HGNC:11614"/>
<dbReference type="CTD" id="6919"/>
<dbReference type="DisGeNET" id="6919"/>
<dbReference type="GeneCards" id="TCEA2"/>
<dbReference type="HGNC" id="HGNC:11614">
    <property type="gene designation" value="TCEA2"/>
</dbReference>
<dbReference type="HPA" id="ENSG00000171703">
    <property type="expression patterns" value="Low tissue specificity"/>
</dbReference>
<dbReference type="MIM" id="604784">
    <property type="type" value="gene"/>
</dbReference>
<dbReference type="neXtProt" id="NX_Q15560"/>
<dbReference type="OpenTargets" id="ENSG00000171703"/>
<dbReference type="PharmGKB" id="PA36373"/>
<dbReference type="VEuPathDB" id="HostDB:ENSG00000171703"/>
<dbReference type="eggNOG" id="KOG1105">
    <property type="taxonomic scope" value="Eukaryota"/>
</dbReference>
<dbReference type="GeneTree" id="ENSGT00940000159974"/>
<dbReference type="HOGENOM" id="CLU_037637_2_0_1"/>
<dbReference type="InParanoid" id="Q15560"/>
<dbReference type="OMA" id="DACDPFR"/>
<dbReference type="OrthoDB" id="44867at2759"/>
<dbReference type="PAN-GO" id="Q15560">
    <property type="GO annotations" value="2 GO annotations based on evolutionary models"/>
</dbReference>
<dbReference type="PhylomeDB" id="Q15560"/>
<dbReference type="TreeFam" id="TF314970"/>
<dbReference type="PathwayCommons" id="Q15560"/>
<dbReference type="SignaLink" id="Q15560"/>
<dbReference type="BioGRID-ORCS" id="6919">
    <property type="hits" value="35 hits in 1159 CRISPR screens"/>
</dbReference>
<dbReference type="CD-CODE" id="91857CE7">
    <property type="entry name" value="Nucleolus"/>
</dbReference>
<dbReference type="EvolutionaryTrace" id="Q15560"/>
<dbReference type="GeneWiki" id="TCEA2"/>
<dbReference type="GenomeRNAi" id="6919"/>
<dbReference type="Pharos" id="Q15560">
    <property type="development level" value="Tbio"/>
</dbReference>
<dbReference type="PRO" id="PR:Q15560"/>
<dbReference type="Proteomes" id="UP000005640">
    <property type="component" value="Chromosome 20"/>
</dbReference>
<dbReference type="RNAct" id="Q15560">
    <property type="molecule type" value="protein"/>
</dbReference>
<dbReference type="Bgee" id="ENSG00000171703">
    <property type="expression patterns" value="Expressed in right hemisphere of cerebellum and 177 other cell types or tissues"/>
</dbReference>
<dbReference type="ExpressionAtlas" id="Q15560">
    <property type="expression patterns" value="baseline and differential"/>
</dbReference>
<dbReference type="GO" id="GO:0005813">
    <property type="term" value="C:centrosome"/>
    <property type="evidence" value="ECO:0000314"/>
    <property type="project" value="HPA"/>
</dbReference>
<dbReference type="GO" id="GO:0036064">
    <property type="term" value="C:ciliary basal body"/>
    <property type="evidence" value="ECO:0000314"/>
    <property type="project" value="HPA"/>
</dbReference>
<dbReference type="GO" id="GO:0005654">
    <property type="term" value="C:nucleoplasm"/>
    <property type="evidence" value="ECO:0000314"/>
    <property type="project" value="HPA"/>
</dbReference>
<dbReference type="GO" id="GO:0005634">
    <property type="term" value="C:nucleus"/>
    <property type="evidence" value="ECO:0000318"/>
    <property type="project" value="GO_Central"/>
</dbReference>
<dbReference type="GO" id="GO:0008023">
    <property type="term" value="C:transcription elongation factor complex"/>
    <property type="evidence" value="ECO:0000303"/>
    <property type="project" value="UniProtKB"/>
</dbReference>
<dbReference type="GO" id="GO:0003677">
    <property type="term" value="F:DNA binding"/>
    <property type="evidence" value="ECO:0007669"/>
    <property type="project" value="UniProtKB-KW"/>
</dbReference>
<dbReference type="GO" id="GO:0008270">
    <property type="term" value="F:zinc ion binding"/>
    <property type="evidence" value="ECO:0007669"/>
    <property type="project" value="UniProtKB-KW"/>
</dbReference>
<dbReference type="GO" id="GO:0006354">
    <property type="term" value="P:DNA-templated transcription elongation"/>
    <property type="evidence" value="ECO:0000303"/>
    <property type="project" value="UniProtKB"/>
</dbReference>
<dbReference type="GO" id="GO:0032784">
    <property type="term" value="P:regulation of DNA-templated transcription elongation"/>
    <property type="evidence" value="ECO:0000303"/>
    <property type="project" value="UniProtKB"/>
</dbReference>
<dbReference type="GO" id="GO:0006357">
    <property type="term" value="P:regulation of transcription by RNA polymerase II"/>
    <property type="evidence" value="ECO:0000318"/>
    <property type="project" value="GO_Central"/>
</dbReference>
<dbReference type="GO" id="GO:0006368">
    <property type="term" value="P:transcription elongation by RNA polymerase II"/>
    <property type="evidence" value="ECO:0007669"/>
    <property type="project" value="InterPro"/>
</dbReference>
<dbReference type="CDD" id="cd00183">
    <property type="entry name" value="TFIIS_I"/>
    <property type="match status" value="1"/>
</dbReference>
<dbReference type="CDD" id="cd13749">
    <property type="entry name" value="Zn-ribbon_TFIIS"/>
    <property type="match status" value="1"/>
</dbReference>
<dbReference type="FunFam" id="2.20.25.10:FF:000001">
    <property type="entry name" value="Probable Transcription elongation factor S-II"/>
    <property type="match status" value="1"/>
</dbReference>
<dbReference type="FunFam" id="1.20.930.10:FF:000002">
    <property type="entry name" value="Transcription elongation factor A (SII), 1"/>
    <property type="match status" value="1"/>
</dbReference>
<dbReference type="Gene3D" id="2.20.25.10">
    <property type="match status" value="1"/>
</dbReference>
<dbReference type="Gene3D" id="1.20.930.10">
    <property type="entry name" value="Conserved domain common to transcription factors TFIIS, elongin A, CRSP70"/>
    <property type="match status" value="1"/>
</dbReference>
<dbReference type="Gene3D" id="1.10.472.30">
    <property type="entry name" value="Transcription elongation factor S-II, central domain"/>
    <property type="match status" value="1"/>
</dbReference>
<dbReference type="InterPro" id="IPR035100">
    <property type="entry name" value="TF_IIS-typ"/>
</dbReference>
<dbReference type="InterPro" id="IPR003617">
    <property type="entry name" value="TFIIS/CRSP70_N_sub"/>
</dbReference>
<dbReference type="InterPro" id="IPR035441">
    <property type="entry name" value="TFIIS/LEDGF_dom_sf"/>
</dbReference>
<dbReference type="InterPro" id="IPR003618">
    <property type="entry name" value="TFIIS_cen_dom"/>
</dbReference>
<dbReference type="InterPro" id="IPR036575">
    <property type="entry name" value="TFIIS_cen_dom_sf"/>
</dbReference>
<dbReference type="InterPro" id="IPR017923">
    <property type="entry name" value="TFIIS_N"/>
</dbReference>
<dbReference type="InterPro" id="IPR006289">
    <property type="entry name" value="TFSII"/>
</dbReference>
<dbReference type="InterPro" id="IPR001222">
    <property type="entry name" value="Znf_TFIIS"/>
</dbReference>
<dbReference type="NCBIfam" id="TIGR01385">
    <property type="entry name" value="TFSII"/>
    <property type="match status" value="1"/>
</dbReference>
<dbReference type="PANTHER" id="PTHR11477:SF3">
    <property type="entry name" value="TRANSCRIPTION ELONGATION FACTOR A PROTEIN 2"/>
    <property type="match status" value="1"/>
</dbReference>
<dbReference type="PANTHER" id="PTHR11477">
    <property type="entry name" value="TRANSCRIPTION FACTOR S-II ZINC FINGER DOMAIN-CONTAINING PROTEIN"/>
    <property type="match status" value="1"/>
</dbReference>
<dbReference type="Pfam" id="PF08711">
    <property type="entry name" value="Med26"/>
    <property type="match status" value="1"/>
</dbReference>
<dbReference type="Pfam" id="PF07500">
    <property type="entry name" value="TFIIS_M"/>
    <property type="match status" value="1"/>
</dbReference>
<dbReference type="Pfam" id="PF01096">
    <property type="entry name" value="Zn_ribbon_TFIIS"/>
    <property type="match status" value="1"/>
</dbReference>
<dbReference type="PIRSF" id="PIRSF006704">
    <property type="entry name" value="TF_IIS"/>
    <property type="match status" value="1"/>
</dbReference>
<dbReference type="SMART" id="SM00510">
    <property type="entry name" value="TFS2M"/>
    <property type="match status" value="1"/>
</dbReference>
<dbReference type="SMART" id="SM00509">
    <property type="entry name" value="TFS2N"/>
    <property type="match status" value="1"/>
</dbReference>
<dbReference type="SMART" id="SM00440">
    <property type="entry name" value="ZnF_C2C2"/>
    <property type="match status" value="1"/>
</dbReference>
<dbReference type="SUPFAM" id="SSF47676">
    <property type="entry name" value="Conserved domain common to transcription factors TFIIS, elongin A, CRSP70"/>
    <property type="match status" value="1"/>
</dbReference>
<dbReference type="SUPFAM" id="SSF46942">
    <property type="entry name" value="Elongation factor TFIIS domain 2"/>
    <property type="match status" value="1"/>
</dbReference>
<dbReference type="SUPFAM" id="SSF57783">
    <property type="entry name" value="Zinc beta-ribbon"/>
    <property type="match status" value="1"/>
</dbReference>
<dbReference type="PROSITE" id="PS51321">
    <property type="entry name" value="TFIIS_CENTRAL"/>
    <property type="match status" value="1"/>
</dbReference>
<dbReference type="PROSITE" id="PS51319">
    <property type="entry name" value="TFIIS_N"/>
    <property type="match status" value="1"/>
</dbReference>
<dbReference type="PROSITE" id="PS00466">
    <property type="entry name" value="ZF_TFIIS_1"/>
    <property type="match status" value="1"/>
</dbReference>
<dbReference type="PROSITE" id="PS51133">
    <property type="entry name" value="ZF_TFIIS_2"/>
    <property type="match status" value="1"/>
</dbReference>
<proteinExistence type="evidence at protein level"/>